<name>LPAR2_HUMAN</name>
<accession>Q9HBW0</accession>
<accession>O00543</accession>
<accession>O43431</accession>
<organism>
    <name type="scientific">Homo sapiens</name>
    <name type="common">Human</name>
    <dbReference type="NCBI Taxonomy" id="9606"/>
    <lineage>
        <taxon>Eukaryota</taxon>
        <taxon>Metazoa</taxon>
        <taxon>Chordata</taxon>
        <taxon>Craniata</taxon>
        <taxon>Vertebrata</taxon>
        <taxon>Euteleostomi</taxon>
        <taxon>Mammalia</taxon>
        <taxon>Eutheria</taxon>
        <taxon>Euarchontoglires</taxon>
        <taxon>Primates</taxon>
        <taxon>Haplorrhini</taxon>
        <taxon>Catarrhini</taxon>
        <taxon>Hominidae</taxon>
        <taxon>Homo</taxon>
    </lineage>
</organism>
<keyword id="KW-0002">3D-structure</keyword>
<keyword id="KW-1003">Cell membrane</keyword>
<keyword id="KW-0297">G-protein coupled receptor</keyword>
<keyword id="KW-0325">Glycoprotein</keyword>
<keyword id="KW-0449">Lipoprotein</keyword>
<keyword id="KW-0472">Membrane</keyword>
<keyword id="KW-0564">Palmitate</keyword>
<keyword id="KW-1267">Proteomics identification</keyword>
<keyword id="KW-0675">Receptor</keyword>
<keyword id="KW-1185">Reference proteome</keyword>
<keyword id="KW-0807">Transducer</keyword>
<keyword id="KW-0812">Transmembrane</keyword>
<keyword id="KW-1133">Transmembrane helix</keyword>
<gene>
    <name evidence="8" type="primary">LPAR2</name>
    <name type="synonym">EDG4</name>
    <name type="synonym">LPA2</name>
</gene>
<reference key="1">
    <citation type="journal article" date="1998" name="J. Biol. Chem.">
        <title>Characterization of a novel subtype of human G protein-coupled receptor for lysophosphatidic acid.</title>
        <authorList>
            <person name="An S."/>
            <person name="Bleu T."/>
            <person name="Hallmark O.G."/>
            <person name="Goetzl E.J."/>
        </authorList>
    </citation>
    <scope>NUCLEOTIDE SEQUENCE [MRNA]</scope>
    <source>
        <tissue>Ovarian carcinoma</tissue>
    </source>
</reference>
<reference key="2">
    <citation type="journal article" date="2000" name="FEBS Lett.">
        <title>Lysophosphatidic acid (LPA) receptors of the EDG family are differentially activated by LPA species. Structure-activity relationship of cloned LPA receptors.</title>
        <authorList>
            <person name="Bandoh K."/>
            <person name="Aoki J."/>
            <person name="Taira A."/>
            <person name="Tsujimoto M."/>
            <person name="Arai H."/>
            <person name="Inoue K."/>
        </authorList>
    </citation>
    <scope>NUCLEOTIDE SEQUENCE [MRNA]</scope>
</reference>
<reference key="3">
    <citation type="submission" date="1999-10" db="EMBL/GenBank/DDBJ databases">
        <title>Human Edg4 lysophosphatidic acid receptor cDNA encoding a putative protein with COOH-terminus different from the previously-reported Edg4.</title>
        <authorList>
            <person name="An S."/>
        </authorList>
    </citation>
    <scope>NUCLEOTIDE SEQUENCE [MRNA]</scope>
    <source>
        <tissue>Colon cancer</tissue>
    </source>
</reference>
<reference key="4">
    <citation type="submission" date="2003-06" db="EMBL/GenBank/DDBJ databases">
        <title>cDNA clones of human proteins involved in signal transduction sequenced by the Guthrie cDNA resource center (www.cdna.org).</title>
        <authorList>
            <person name="Kopatz S.A."/>
            <person name="King M.M."/>
            <person name="Cismowski M.J."/>
            <person name="Aronstam R.S."/>
            <person name="Sharma S.V."/>
        </authorList>
    </citation>
    <scope>NUCLEOTIDE SEQUENCE [LARGE SCALE MRNA]</scope>
</reference>
<reference key="5">
    <citation type="journal article" date="2004" name="Nature">
        <title>The DNA sequence and biology of human chromosome 19.</title>
        <authorList>
            <person name="Grimwood J."/>
            <person name="Gordon L.A."/>
            <person name="Olsen A.S."/>
            <person name="Terry A."/>
            <person name="Schmutz J."/>
            <person name="Lamerdin J.E."/>
            <person name="Hellsten U."/>
            <person name="Goodstein D."/>
            <person name="Couronne O."/>
            <person name="Tran-Gyamfi M."/>
            <person name="Aerts A."/>
            <person name="Altherr M."/>
            <person name="Ashworth L."/>
            <person name="Bajorek E."/>
            <person name="Black S."/>
            <person name="Branscomb E."/>
            <person name="Caenepeel S."/>
            <person name="Carrano A.V."/>
            <person name="Caoile C."/>
            <person name="Chan Y.M."/>
            <person name="Christensen M."/>
            <person name="Cleland C.A."/>
            <person name="Copeland A."/>
            <person name="Dalin E."/>
            <person name="Dehal P."/>
            <person name="Denys M."/>
            <person name="Detter J.C."/>
            <person name="Escobar J."/>
            <person name="Flowers D."/>
            <person name="Fotopulos D."/>
            <person name="Garcia C."/>
            <person name="Georgescu A.M."/>
            <person name="Glavina T."/>
            <person name="Gomez M."/>
            <person name="Gonzales E."/>
            <person name="Groza M."/>
            <person name="Hammon N."/>
            <person name="Hawkins T."/>
            <person name="Haydu L."/>
            <person name="Ho I."/>
            <person name="Huang W."/>
            <person name="Israni S."/>
            <person name="Jett J."/>
            <person name="Kadner K."/>
            <person name="Kimball H."/>
            <person name="Kobayashi A."/>
            <person name="Larionov V."/>
            <person name="Leem S.-H."/>
            <person name="Lopez F."/>
            <person name="Lou Y."/>
            <person name="Lowry S."/>
            <person name="Malfatti S."/>
            <person name="Martinez D."/>
            <person name="McCready P.M."/>
            <person name="Medina C."/>
            <person name="Morgan J."/>
            <person name="Nelson K."/>
            <person name="Nolan M."/>
            <person name="Ovcharenko I."/>
            <person name="Pitluck S."/>
            <person name="Pollard M."/>
            <person name="Popkie A.P."/>
            <person name="Predki P."/>
            <person name="Quan G."/>
            <person name="Ramirez L."/>
            <person name="Rash S."/>
            <person name="Retterer J."/>
            <person name="Rodriguez A."/>
            <person name="Rogers S."/>
            <person name="Salamov A."/>
            <person name="Salazar A."/>
            <person name="She X."/>
            <person name="Smith D."/>
            <person name="Slezak T."/>
            <person name="Solovyev V."/>
            <person name="Thayer N."/>
            <person name="Tice H."/>
            <person name="Tsai M."/>
            <person name="Ustaszewska A."/>
            <person name="Vo N."/>
            <person name="Wagner M."/>
            <person name="Wheeler J."/>
            <person name="Wu K."/>
            <person name="Xie G."/>
            <person name="Yang J."/>
            <person name="Dubchak I."/>
            <person name="Furey T.S."/>
            <person name="DeJong P."/>
            <person name="Dickson M."/>
            <person name="Gordon D."/>
            <person name="Eichler E.E."/>
            <person name="Pennacchio L.A."/>
            <person name="Richardson P."/>
            <person name="Stubbs L."/>
            <person name="Rokhsar D.S."/>
            <person name="Myers R.M."/>
            <person name="Rubin E.M."/>
            <person name="Lucas S.M."/>
        </authorList>
    </citation>
    <scope>NUCLEOTIDE SEQUENCE [LARGE SCALE GENOMIC DNA]</scope>
</reference>
<reference key="6">
    <citation type="journal article" date="2004" name="Genome Res.">
        <title>The status, quality, and expansion of the NIH full-length cDNA project: the Mammalian Gene Collection (MGC).</title>
        <authorList>
            <consortium name="The MGC Project Team"/>
        </authorList>
    </citation>
    <scope>NUCLEOTIDE SEQUENCE [LARGE SCALE MRNA]</scope>
    <source>
        <tissue>Lung</tissue>
    </source>
</reference>
<reference key="7">
    <citation type="journal article" date="2000" name="Mol. Pharmacol.">
        <title>Lysophosphatidic acid receptors.</title>
        <authorList>
            <person name="Contos J.J.A."/>
            <person name="Ishii I."/>
            <person name="Chun J."/>
        </authorList>
    </citation>
    <scope>REVIEW</scope>
</reference>
<reference key="8">
    <citation type="journal article" date="2000" name="Genomics">
        <title>Genomic characterization of the lysophosphatidic acid receptor gene, lp(A2)/Edg4, and identification of a frameshift mutation in a previously characterized cDNA.</title>
        <authorList>
            <person name="Contos J.J.A."/>
            <person name="Chun J."/>
        </authorList>
    </citation>
    <scope>IDENTIFICATION OF A PROBABLE FRAMESHIFT MUTATION</scope>
</reference>
<reference key="9">
    <citation type="journal article" date="2004" name="Mol. Cell. Biol.">
        <title>NHERF2 specifically interacts with LPA2 receptor and defines the specificity and efficiency of receptor-mediated phospholipase C-beta3 activation.</title>
        <authorList>
            <person name="Oh Y.-S."/>
            <person name="Jo N.W."/>
            <person name="Choi J.W."/>
            <person name="Kim H.S."/>
            <person name="Seo S.-W."/>
            <person name="Kang K.-O."/>
            <person name="Hwang J.-I."/>
            <person name="Heo K."/>
            <person name="Kim S.-H."/>
            <person name="Kim Y.-H."/>
            <person name="Kim I.-H."/>
            <person name="Kim J.H."/>
            <person name="Banno Y."/>
            <person name="Ryu S.H."/>
            <person name="Suh P.-G."/>
        </authorList>
    </citation>
    <scope>FUNCTION</scope>
    <scope>INTERACTION WITH SLC9A3R2/NHERF2 AND PLCB3</scope>
</reference>
<reference key="10">
    <citation type="journal article" date="2007" name="Cell. Signal.">
        <title>MAGI-3 regulates LPA-induced activation of Erk and RhoA.</title>
        <authorList>
            <person name="Zhang H."/>
            <person name="Wang D."/>
            <person name="Sun H."/>
            <person name="Hall R.A."/>
            <person name="Yun C.C."/>
        </authorList>
    </citation>
    <scope>INTERACTION WITH MAGI3</scope>
    <scope>MUTAGENESIS OF ASP-345; SER-346; THR-347 AND LEU-348</scope>
</reference>
<reference key="11">
    <citation type="journal article" date="2009" name="Cell. Signal.">
        <title>Dual regulation of lysophosphatidic acid (LPA1) receptor signalling by Ral and GRK.</title>
        <authorList>
            <person name="Aziziyeh A.I."/>
            <person name="Li T.T."/>
            <person name="Pape C."/>
            <person name="Pampillo M."/>
            <person name="Chidiac P."/>
            <person name="Possmayer F."/>
            <person name="Babwah A.V."/>
            <person name="Bhattacharya M."/>
        </authorList>
    </citation>
    <scope>FUNCTION</scope>
    <scope>SUBCELLULAR LOCATION</scope>
    <scope>INTERACTION WITH RALA AND GRK2</scope>
</reference>
<sequence length="348" mass="38741">MGQCYYNETIGFFYNNSGKELSSHWRPKDVVVVALGLTVSVLVLLTNLLVIAAIASNRRFHQPIYYLLGNLAAADLFAGVAYLFLMFHTGPRTARLSLEGWFLRQGLLDTSLTASVATLLAIAVERHRSVMAVQLHSRLPRGRVVMLIVGVWVAALGLGLLPAHSWHCLCALDRCSRMAPLLSRSYLAVWALSSLLVFLLMVAVYTRIFFYVRRRVQRMAEHVSCHPRYRETTLSLVKTVVIILGAFVVCWTPGQVVLLLDGLGCESCNVLAVEKYFLLLAEANSLVNAAVYSCRDAEMRRTFRRLLCCACLRQSTRESVHYTSSAQGGASTRIMLPENGHPLMDSTL</sequence>
<feature type="chain" id="PRO_0000069424" description="Lysophosphatidic acid receptor 2">
    <location>
        <begin position="1"/>
        <end position="348"/>
    </location>
</feature>
<feature type="topological domain" description="Extracellular" evidence="2">
    <location>
        <begin position="1"/>
        <end position="30"/>
    </location>
</feature>
<feature type="transmembrane region" description="Helical; Name=1" evidence="2">
    <location>
        <begin position="31"/>
        <end position="51"/>
    </location>
</feature>
<feature type="topological domain" description="Cytoplasmic" evidence="2">
    <location>
        <begin position="52"/>
        <end position="66"/>
    </location>
</feature>
<feature type="transmembrane region" description="Helical; Name=2" evidence="2">
    <location>
        <begin position="67"/>
        <end position="87"/>
    </location>
</feature>
<feature type="topological domain" description="Extracellular" evidence="2">
    <location>
        <begin position="88"/>
        <end position="100"/>
    </location>
</feature>
<feature type="transmembrane region" description="Helical; Name=3" evidence="2">
    <location>
        <begin position="101"/>
        <end position="123"/>
    </location>
</feature>
<feature type="topological domain" description="Cytoplasmic" evidence="2">
    <location>
        <begin position="124"/>
        <end position="143"/>
    </location>
</feature>
<feature type="transmembrane region" description="Helical; Name=4" evidence="2">
    <location>
        <begin position="144"/>
        <end position="164"/>
    </location>
</feature>
<feature type="topological domain" description="Extracellular" evidence="2">
    <location>
        <begin position="165"/>
        <end position="185"/>
    </location>
</feature>
<feature type="transmembrane region" description="Helical; Name=5" evidence="2">
    <location>
        <begin position="186"/>
        <end position="206"/>
    </location>
</feature>
<feature type="topological domain" description="Cytoplasmic" evidence="2">
    <location>
        <begin position="207"/>
        <end position="239"/>
    </location>
</feature>
<feature type="transmembrane region" description="Helical; Name=6" evidence="2">
    <location>
        <begin position="240"/>
        <end position="260"/>
    </location>
</feature>
<feature type="topological domain" description="Extracellular" evidence="2">
    <location>
        <begin position="261"/>
        <end position="276"/>
    </location>
</feature>
<feature type="transmembrane region" description="Helical; Name=7" evidence="2">
    <location>
        <begin position="277"/>
        <end position="294"/>
    </location>
</feature>
<feature type="topological domain" description="Cytoplasmic" evidence="2">
    <location>
        <begin position="295"/>
        <end position="348"/>
    </location>
</feature>
<feature type="short sequence motif" description="PDZ-binding">
    <location>
        <begin position="345"/>
        <end position="348"/>
    </location>
</feature>
<feature type="lipid moiety-binding region" description="S-palmitoyl cysteine" evidence="1">
    <location>
        <position position="308"/>
    </location>
</feature>
<feature type="glycosylation site" description="N-linked (GlcNAc...) asparagine" evidence="2">
    <location>
        <position position="7"/>
    </location>
</feature>
<feature type="glycosylation site" description="N-linked (GlcNAc...) asparagine" evidence="2">
    <location>
        <position position="15"/>
    </location>
</feature>
<feature type="mutagenesis site" description="Abolishes interaction with MAGI3." evidence="5">
    <original>D</original>
    <variation>A</variation>
    <location>
        <position position="345"/>
    </location>
</feature>
<feature type="mutagenesis site" description="Abolishes interaction with MAGI3." evidence="5">
    <original>S</original>
    <variation>A</variation>
    <location>
        <position position="346"/>
    </location>
</feature>
<feature type="mutagenesis site" description="Does not affect interaction with MAGI3." evidence="5">
    <original>T</original>
    <variation>A</variation>
    <location>
        <position position="347"/>
    </location>
</feature>
<feature type="mutagenesis site" description="Abolishes interaction with MAGI3." evidence="5">
    <original>L</original>
    <variation>A</variation>
    <location>
        <position position="348"/>
    </location>
</feature>
<feature type="sequence conflict" description="In Ref. 3; AAG28521." evidence="7" ref="3">
    <original>R</original>
    <variation>S</variation>
    <location>
        <position position="218"/>
    </location>
</feature>
<evidence type="ECO:0000250" key="1"/>
<evidence type="ECO:0000255" key="2"/>
<evidence type="ECO:0000255" key="3">
    <source>
        <dbReference type="PROSITE-ProRule" id="PRU00521"/>
    </source>
</evidence>
<evidence type="ECO:0000269" key="4">
    <source>
    </source>
</evidence>
<evidence type="ECO:0000269" key="5">
    <source>
    </source>
</evidence>
<evidence type="ECO:0000269" key="6">
    <source>
    </source>
</evidence>
<evidence type="ECO:0000305" key="7"/>
<evidence type="ECO:0000312" key="8">
    <source>
        <dbReference type="HGNC" id="HGNC:3168"/>
    </source>
</evidence>
<proteinExistence type="evidence at protein level"/>
<comment type="function">
    <text evidence="4 6">Receptor for lysophosphatidic acid (LPA), a mediator of diverse cellular activities. Seems to be coupled to the G(i)/G(o), G(12)/G(13), and G(q) families of heteromeric G proteins. Plays a key role in phospholipase C-beta (PLC-beta) signaling pathway. Stimulates phospholipase C (PLC) activity in a manner that is independent of RALA activation.</text>
</comment>
<comment type="subunit">
    <text evidence="4 5 6">Interacts with SLC9A3R2/NHERF2, MAGI3 and PLCB3. Interacts with RALA and GRK2.</text>
</comment>
<comment type="interaction">
    <interactant intactId="EBI-765995">
        <id>Q9HBW0</id>
    </interactant>
    <interactant intactId="EBI-349854">
        <id>P13569</id>
        <label>CFTR</label>
    </interactant>
    <organismsDiffer>false</organismsDiffer>
    <experiments>3</experiments>
</comment>
<comment type="interaction">
    <interactant intactId="EBI-765995">
        <id>Q9HBW0</id>
    </interactant>
    <interactant intactId="EBI-1170392">
        <id>P17931</id>
        <label>LGALS3</label>
    </interactant>
    <organismsDiffer>false</organismsDiffer>
    <experiments>3</experiments>
</comment>
<comment type="interaction">
    <interactant intactId="EBI-765995">
        <id>Q9HBW0</id>
    </interactant>
    <interactant intactId="EBI-1149760">
        <id>Q15599</id>
        <label>NHERF2</label>
    </interactant>
    <organismsDiffer>false</organismsDiffer>
    <experiments>3</experiments>
</comment>
<comment type="subcellular location">
    <subcellularLocation>
        <location evidence="6">Cell surface</location>
    </subcellularLocation>
    <subcellularLocation>
        <location evidence="6">Cell membrane</location>
        <topology evidence="6">Multi-pass membrane protein</topology>
    </subcellularLocation>
    <text>Prior to LPA treatment found predominantly at the cell surface but in the presence of LPA colocalizes with RALA in the endocytic vesicles.</text>
</comment>
<comment type="tissue specificity">
    <text>Expressed most abundantly in testes and peripheral blood leukocytes with less expression in pancreas, spleen, thymus and prostate. Little or no expression in heart, brain, placenta, lung, liver, skeletal muscle, kidney, ovary, small intestine, or colon.</text>
</comment>
<comment type="miscellaneous">
    <text>PubMed:9525886 cDNA clone has a guanine nucleotide deletion that causes a frameshift near its C-terminal coding region. This likely reflects a somatic mutation in the ovary tumor cells from which the cDNA was isolated and may have altered the function of the encoded receptor, and contributed to transformation of the original ovary cells that formed a tumor.</text>
</comment>
<comment type="similarity">
    <text evidence="3">Belongs to the G-protein coupled receptor 1 family.</text>
</comment>
<comment type="sequence caution" evidence="7">
    <conflict type="erroneous initiation">
        <sequence resource="EMBL-CDS" id="AAB61528"/>
    </conflict>
    <text>Extended N-terminus.</text>
</comment>
<comment type="sequence caution" evidence="7">
    <conflict type="erroneous initiation">
        <sequence resource="EMBL-CDS" id="AAC27728"/>
    </conflict>
    <text>Extended N-terminus.</text>
</comment>
<comment type="sequence caution" evidence="7">
    <conflict type="frameshift">
        <sequence resource="EMBL-CDS" id="AAC27728"/>
    </conflict>
</comment>
<comment type="sequence caution" evidence="7">
    <conflict type="erroneous initiation">
        <sequence resource="EMBL-CDS" id="AAF43409"/>
    </conflict>
    <text>Extended N-terminus.</text>
</comment>
<comment type="sequence caution" evidence="7">
    <conflict type="erroneous initiation">
        <sequence resource="EMBL-CDS" id="AAG28521"/>
    </conflict>
    <text>Extended N-terminus.</text>
</comment>
<comment type="sequence caution" evidence="7">
    <conflict type="erroneous initiation">
        <sequence resource="EMBL-CDS" id="AAH25695"/>
    </conflict>
    <text>Extended N-terminus.</text>
</comment>
<comment type="sequence caution" evidence="7">
    <conflict type="erroneous initiation">
        <sequence resource="EMBL-CDS" id="AAP84361"/>
    </conflict>
    <text>Extended N-terminus.</text>
</comment>
<comment type="online information" name="Atlas of Genetics and Cytogenetics in Oncology and Haematology">
    <link uri="https://atlasgeneticsoncology.org/gene/40406/LPAR2"/>
</comment>
<dbReference type="EMBL" id="AF011466">
    <property type="protein sequence ID" value="AAC27728.1"/>
    <property type="status" value="ALT_SEQ"/>
    <property type="molecule type" value="mRNA"/>
</dbReference>
<dbReference type="EMBL" id="AF233092">
    <property type="protein sequence ID" value="AAF43409.1"/>
    <property type="status" value="ALT_INIT"/>
    <property type="molecule type" value="mRNA"/>
</dbReference>
<dbReference type="EMBL" id="AF197929">
    <property type="protein sequence ID" value="AAG28521.1"/>
    <property type="status" value="ALT_INIT"/>
    <property type="molecule type" value="mRNA"/>
</dbReference>
<dbReference type="EMBL" id="AY322548">
    <property type="protein sequence ID" value="AAP84361.1"/>
    <property type="status" value="ALT_INIT"/>
    <property type="molecule type" value="mRNA"/>
</dbReference>
<dbReference type="EMBL" id="AC002306">
    <property type="protein sequence ID" value="AAB61528.1"/>
    <property type="status" value="ALT_INIT"/>
    <property type="molecule type" value="Genomic_DNA"/>
</dbReference>
<dbReference type="EMBL" id="BC025695">
    <property type="protein sequence ID" value="AAH25695.1"/>
    <property type="status" value="ALT_INIT"/>
    <property type="molecule type" value="mRNA"/>
</dbReference>
<dbReference type="CCDS" id="CCDS12407.2"/>
<dbReference type="RefSeq" id="NP_001382589.1">
    <property type="nucleotide sequence ID" value="NM_001395660.1"/>
</dbReference>
<dbReference type="RefSeq" id="NP_004711.2">
    <property type="nucleotide sequence ID" value="NM_004720.5"/>
</dbReference>
<dbReference type="RefSeq" id="XP_011526723.1">
    <property type="nucleotide sequence ID" value="XM_011528421.2"/>
</dbReference>
<dbReference type="RefSeq" id="XP_016882957.1">
    <property type="nucleotide sequence ID" value="XM_017027468.1"/>
</dbReference>
<dbReference type="RefSeq" id="XP_016882958.1">
    <property type="nucleotide sequence ID" value="XM_017027469.1"/>
</dbReference>
<dbReference type="PDB" id="4P0C">
    <property type="method" value="X-ray"/>
    <property type="resolution" value="1.34 A"/>
    <property type="chains" value="A=344-348"/>
</dbReference>
<dbReference type="PDBsum" id="4P0C"/>
<dbReference type="SMR" id="Q9HBW0"/>
<dbReference type="BioGRID" id="114611">
    <property type="interactions" value="134"/>
</dbReference>
<dbReference type="CORUM" id="Q9HBW0"/>
<dbReference type="FunCoup" id="Q9HBW0">
    <property type="interactions" value="1137"/>
</dbReference>
<dbReference type="IntAct" id="Q9HBW0">
    <property type="interactions" value="115"/>
</dbReference>
<dbReference type="STRING" id="9606.ENSP00000443256"/>
<dbReference type="BindingDB" id="Q9HBW0"/>
<dbReference type="ChEMBL" id="CHEMBL3724"/>
<dbReference type="GuidetoPHARMACOLOGY" id="273"/>
<dbReference type="SwissLipids" id="SLP:000001569"/>
<dbReference type="TCDB" id="9.A.14.2.5">
    <property type="family name" value="the g-protein-coupled receptor (gpcr) family"/>
</dbReference>
<dbReference type="GlyCosmos" id="Q9HBW0">
    <property type="glycosylation" value="2 sites, No reported glycans"/>
</dbReference>
<dbReference type="GlyGen" id="Q9HBW0">
    <property type="glycosylation" value="2 sites"/>
</dbReference>
<dbReference type="iPTMnet" id="Q9HBW0"/>
<dbReference type="PhosphoSitePlus" id="Q9HBW0"/>
<dbReference type="SwissPalm" id="Q9HBW0"/>
<dbReference type="BioMuta" id="LPAR2"/>
<dbReference type="DMDM" id="26393399"/>
<dbReference type="jPOST" id="Q9HBW0"/>
<dbReference type="MassIVE" id="Q9HBW0"/>
<dbReference type="PaxDb" id="9606-ENSP00000443256"/>
<dbReference type="PeptideAtlas" id="Q9HBW0"/>
<dbReference type="ProteomicsDB" id="81600"/>
<dbReference type="Antibodypedia" id="15391">
    <property type="antibodies" value="336 antibodies from 33 providers"/>
</dbReference>
<dbReference type="DNASU" id="9170"/>
<dbReference type="Ensembl" id="ENST00000407877.8">
    <property type="protein sequence ID" value="ENSP00000384665.3"/>
    <property type="gene ID" value="ENSG00000064547.14"/>
</dbReference>
<dbReference type="Ensembl" id="ENST00000542587.5">
    <property type="protein sequence ID" value="ENSP00000443256.2"/>
    <property type="gene ID" value="ENSG00000064547.14"/>
</dbReference>
<dbReference type="Ensembl" id="ENST00000586703.1">
    <property type="protein sequence ID" value="ENSP00000465280.2"/>
    <property type="gene ID" value="ENSG00000064547.14"/>
</dbReference>
<dbReference type="GeneID" id="9170"/>
<dbReference type="MANE-Select" id="ENST00000407877.8">
    <property type="protein sequence ID" value="ENSP00000384665.3"/>
    <property type="RefSeq nucleotide sequence ID" value="NM_001395660.1"/>
    <property type="RefSeq protein sequence ID" value="NP_001382589.1"/>
</dbReference>
<dbReference type="UCSC" id="uc002nna.6">
    <property type="organism name" value="human"/>
</dbReference>
<dbReference type="AGR" id="HGNC:3168"/>
<dbReference type="DisGeNET" id="9170"/>
<dbReference type="GeneCards" id="LPAR2"/>
<dbReference type="HGNC" id="HGNC:3168">
    <property type="gene designation" value="LPAR2"/>
</dbReference>
<dbReference type="HPA" id="ENSG00000064547">
    <property type="expression patterns" value="Tissue enhanced (lymphoid)"/>
</dbReference>
<dbReference type="MIM" id="605110">
    <property type="type" value="gene"/>
</dbReference>
<dbReference type="neXtProt" id="NX_Q9HBW0"/>
<dbReference type="OpenTargets" id="ENSG00000064547"/>
<dbReference type="PharmGKB" id="PA162394202"/>
<dbReference type="VEuPathDB" id="HostDB:ENSG00000064547"/>
<dbReference type="eggNOG" id="KOG3656">
    <property type="taxonomic scope" value="Eukaryota"/>
</dbReference>
<dbReference type="GeneTree" id="ENSGT01120000271896"/>
<dbReference type="HOGENOM" id="CLU_047979_0_0_1"/>
<dbReference type="InParanoid" id="Q9HBW0"/>
<dbReference type="OrthoDB" id="5987098at2759"/>
<dbReference type="PAN-GO" id="Q9HBW0">
    <property type="GO annotations" value="5 GO annotations based on evolutionary models"/>
</dbReference>
<dbReference type="PhylomeDB" id="Q9HBW0"/>
<dbReference type="PathwayCommons" id="Q9HBW0"/>
<dbReference type="Reactome" id="R-HSA-416476">
    <property type="pathway name" value="G alpha (q) signalling events"/>
</dbReference>
<dbReference type="Reactome" id="R-HSA-418594">
    <property type="pathway name" value="G alpha (i) signalling events"/>
</dbReference>
<dbReference type="Reactome" id="R-HSA-419408">
    <property type="pathway name" value="Lysosphingolipid and LPA receptors"/>
</dbReference>
<dbReference type="SignaLink" id="Q9HBW0"/>
<dbReference type="SIGNOR" id="Q9HBW0"/>
<dbReference type="BioGRID-ORCS" id="9170">
    <property type="hits" value="47 hits in 1166 CRISPR screens"/>
</dbReference>
<dbReference type="ChiTaRS" id="LPAR2">
    <property type="organism name" value="human"/>
</dbReference>
<dbReference type="GeneWiki" id="LPAR2"/>
<dbReference type="GenomeRNAi" id="9170"/>
<dbReference type="Pharos" id="Q9HBW0">
    <property type="development level" value="Tchem"/>
</dbReference>
<dbReference type="PRO" id="PR:Q9HBW0"/>
<dbReference type="Proteomes" id="UP000005640">
    <property type="component" value="Chromosome 19"/>
</dbReference>
<dbReference type="RNAct" id="Q9HBW0">
    <property type="molecule type" value="protein"/>
</dbReference>
<dbReference type="Bgee" id="ENSG00000064547">
    <property type="expression patterns" value="Expressed in ganglionic eminence and 142 other cell types or tissues"/>
</dbReference>
<dbReference type="ExpressionAtlas" id="Q9HBW0">
    <property type="expression patterns" value="baseline and differential"/>
</dbReference>
<dbReference type="GO" id="GO:0009986">
    <property type="term" value="C:cell surface"/>
    <property type="evidence" value="ECO:0000314"/>
    <property type="project" value="UniProtKB"/>
</dbReference>
<dbReference type="GO" id="GO:0005737">
    <property type="term" value="C:cytoplasm"/>
    <property type="evidence" value="ECO:0000318"/>
    <property type="project" value="GO_Central"/>
</dbReference>
<dbReference type="GO" id="GO:0098978">
    <property type="term" value="C:glutamatergic synapse"/>
    <property type="evidence" value="ECO:0007669"/>
    <property type="project" value="Ensembl"/>
</dbReference>
<dbReference type="GO" id="GO:0005886">
    <property type="term" value="C:plasma membrane"/>
    <property type="evidence" value="ECO:0000318"/>
    <property type="project" value="GO_Central"/>
</dbReference>
<dbReference type="GO" id="GO:0048787">
    <property type="term" value="C:presynaptic active zone membrane"/>
    <property type="evidence" value="ECO:0007669"/>
    <property type="project" value="Ensembl"/>
</dbReference>
<dbReference type="GO" id="GO:0004930">
    <property type="term" value="F:G protein-coupled receptor activity"/>
    <property type="evidence" value="ECO:0000318"/>
    <property type="project" value="GO_Central"/>
</dbReference>
<dbReference type="GO" id="GO:0008289">
    <property type="term" value="F:lipid binding"/>
    <property type="evidence" value="ECO:0000304"/>
    <property type="project" value="ProtInc"/>
</dbReference>
<dbReference type="GO" id="GO:0070915">
    <property type="term" value="F:lysophosphatidic acid receptor activity"/>
    <property type="evidence" value="ECO:0007669"/>
    <property type="project" value="InterPro"/>
</dbReference>
<dbReference type="GO" id="GO:0030165">
    <property type="term" value="F:PDZ domain binding"/>
    <property type="evidence" value="ECO:0007669"/>
    <property type="project" value="Ensembl"/>
</dbReference>
<dbReference type="GO" id="GO:0007189">
    <property type="term" value="P:adenylate cyclase-activating G protein-coupled receptor signaling pathway"/>
    <property type="evidence" value="ECO:0000318"/>
    <property type="project" value="GO_Central"/>
</dbReference>
<dbReference type="GO" id="GO:0007186">
    <property type="term" value="P:G protein-coupled receptor signaling pathway"/>
    <property type="evidence" value="ECO:0000314"/>
    <property type="project" value="UniProtKB"/>
</dbReference>
<dbReference type="GO" id="GO:0007204">
    <property type="term" value="P:positive regulation of cytosolic calcium ion concentration"/>
    <property type="evidence" value="ECO:0000304"/>
    <property type="project" value="ProtInc"/>
</dbReference>
<dbReference type="GO" id="GO:0043410">
    <property type="term" value="P:positive regulation of MAPK cascade"/>
    <property type="evidence" value="ECO:0007669"/>
    <property type="project" value="Ensembl"/>
</dbReference>
<dbReference type="GO" id="GO:0035025">
    <property type="term" value="P:positive regulation of Rho protein signal transduction"/>
    <property type="evidence" value="ECO:0007669"/>
    <property type="project" value="Ensembl"/>
</dbReference>
<dbReference type="GO" id="GO:0019222">
    <property type="term" value="P:regulation of metabolic process"/>
    <property type="evidence" value="ECO:0000318"/>
    <property type="project" value="GO_Central"/>
</dbReference>
<dbReference type="CDD" id="cd15342">
    <property type="entry name" value="7tmA_LPAR2_Edg4"/>
    <property type="match status" value="1"/>
</dbReference>
<dbReference type="FunFam" id="1.20.1070.10:FF:000025">
    <property type="entry name" value="Lysophosphatidic acid receptor 1"/>
    <property type="match status" value="1"/>
</dbReference>
<dbReference type="Gene3D" id="1.20.1070.10">
    <property type="entry name" value="Rhodopsin 7-helix transmembrane proteins"/>
    <property type="match status" value="1"/>
</dbReference>
<dbReference type="InterPro" id="IPR000276">
    <property type="entry name" value="GPCR_Rhodpsn"/>
</dbReference>
<dbReference type="InterPro" id="IPR017452">
    <property type="entry name" value="GPCR_Rhodpsn_7TM"/>
</dbReference>
<dbReference type="InterPro" id="IPR004065">
    <property type="entry name" value="LPA_rcpt"/>
</dbReference>
<dbReference type="InterPro" id="IPR004066">
    <property type="entry name" value="LPA_rcpt_EDG4"/>
</dbReference>
<dbReference type="PANTHER" id="PTHR22750">
    <property type="entry name" value="G-PROTEIN COUPLED RECEPTOR"/>
    <property type="match status" value="1"/>
</dbReference>
<dbReference type="Pfam" id="PF00001">
    <property type="entry name" value="7tm_1"/>
    <property type="match status" value="1"/>
</dbReference>
<dbReference type="PRINTS" id="PR01528">
    <property type="entry name" value="EDG4RECEPTOR"/>
</dbReference>
<dbReference type="PRINTS" id="PR00237">
    <property type="entry name" value="GPCRRHODOPSN"/>
</dbReference>
<dbReference type="PRINTS" id="PR01527">
    <property type="entry name" value="LPARECEPTOR"/>
</dbReference>
<dbReference type="SMART" id="SM01381">
    <property type="entry name" value="7TM_GPCR_Srsx"/>
    <property type="match status" value="1"/>
</dbReference>
<dbReference type="SUPFAM" id="SSF81321">
    <property type="entry name" value="Family A G protein-coupled receptor-like"/>
    <property type="match status" value="1"/>
</dbReference>
<dbReference type="PROSITE" id="PS00237">
    <property type="entry name" value="G_PROTEIN_RECEP_F1_1"/>
    <property type="match status" value="1"/>
</dbReference>
<dbReference type="PROSITE" id="PS50262">
    <property type="entry name" value="G_PROTEIN_RECEP_F1_2"/>
    <property type="match status" value="1"/>
</dbReference>
<protein>
    <recommendedName>
        <fullName evidence="7">Lysophosphatidic acid receptor 2</fullName>
        <shortName>LPA receptor 2</shortName>
        <shortName>LPA-2</shortName>
    </recommendedName>
    <alternativeName>
        <fullName>Lysophosphatidic acid receptor Edg-4</fullName>
    </alternativeName>
</protein>